<comment type="catalytic activity">
    <reaction evidence="1">
        <text>tRNA(Asn) + L-asparagine + ATP = L-asparaginyl-tRNA(Asn) + AMP + diphosphate + H(+)</text>
        <dbReference type="Rhea" id="RHEA:11180"/>
        <dbReference type="Rhea" id="RHEA-COMP:9659"/>
        <dbReference type="Rhea" id="RHEA-COMP:9674"/>
        <dbReference type="ChEBI" id="CHEBI:15378"/>
        <dbReference type="ChEBI" id="CHEBI:30616"/>
        <dbReference type="ChEBI" id="CHEBI:33019"/>
        <dbReference type="ChEBI" id="CHEBI:58048"/>
        <dbReference type="ChEBI" id="CHEBI:78442"/>
        <dbReference type="ChEBI" id="CHEBI:78515"/>
        <dbReference type="ChEBI" id="CHEBI:456215"/>
        <dbReference type="EC" id="6.1.1.22"/>
    </reaction>
</comment>
<comment type="subunit">
    <text evidence="1">Homodimer.</text>
</comment>
<comment type="subcellular location">
    <subcellularLocation>
        <location evidence="1">Cytoplasm</location>
    </subcellularLocation>
</comment>
<comment type="similarity">
    <text evidence="1">Belongs to the class-II aminoacyl-tRNA synthetase family.</text>
</comment>
<name>SYN_MANSM</name>
<proteinExistence type="inferred from homology"/>
<reference key="1">
    <citation type="journal article" date="2004" name="Nat. Biotechnol.">
        <title>The genome sequence of the capnophilic rumen bacterium Mannheimia succiniciproducens.</title>
        <authorList>
            <person name="Hong S.H."/>
            <person name="Kim J.S."/>
            <person name="Lee S.Y."/>
            <person name="In Y.H."/>
            <person name="Choi S.S."/>
            <person name="Rih J.-K."/>
            <person name="Kim C.H."/>
            <person name="Jeong H."/>
            <person name="Hur C.G."/>
            <person name="Kim J.J."/>
        </authorList>
    </citation>
    <scope>NUCLEOTIDE SEQUENCE [LARGE SCALE GENOMIC DNA]</scope>
    <source>
        <strain>KCTC 0769BP / MBEL55E</strain>
    </source>
</reference>
<dbReference type="EC" id="6.1.1.22" evidence="1"/>
<dbReference type="EMBL" id="AE016827">
    <property type="protein sequence ID" value="AAU37649.1"/>
    <property type="molecule type" value="Genomic_DNA"/>
</dbReference>
<dbReference type="RefSeq" id="WP_011200218.1">
    <property type="nucleotide sequence ID" value="NC_006300.1"/>
</dbReference>
<dbReference type="SMR" id="Q65TR1"/>
<dbReference type="STRING" id="221988.MS1042"/>
<dbReference type="KEGG" id="msu:MS1042"/>
<dbReference type="eggNOG" id="COG0017">
    <property type="taxonomic scope" value="Bacteria"/>
</dbReference>
<dbReference type="HOGENOM" id="CLU_004553_2_0_6"/>
<dbReference type="OrthoDB" id="9762036at2"/>
<dbReference type="Proteomes" id="UP000000607">
    <property type="component" value="Chromosome"/>
</dbReference>
<dbReference type="GO" id="GO:0005737">
    <property type="term" value="C:cytoplasm"/>
    <property type="evidence" value="ECO:0007669"/>
    <property type="project" value="UniProtKB-SubCell"/>
</dbReference>
<dbReference type="GO" id="GO:0004816">
    <property type="term" value="F:asparagine-tRNA ligase activity"/>
    <property type="evidence" value="ECO:0007669"/>
    <property type="project" value="UniProtKB-UniRule"/>
</dbReference>
<dbReference type="GO" id="GO:0005524">
    <property type="term" value="F:ATP binding"/>
    <property type="evidence" value="ECO:0007669"/>
    <property type="project" value="UniProtKB-UniRule"/>
</dbReference>
<dbReference type="GO" id="GO:0003676">
    <property type="term" value="F:nucleic acid binding"/>
    <property type="evidence" value="ECO:0007669"/>
    <property type="project" value="InterPro"/>
</dbReference>
<dbReference type="GO" id="GO:0006421">
    <property type="term" value="P:asparaginyl-tRNA aminoacylation"/>
    <property type="evidence" value="ECO:0007669"/>
    <property type="project" value="UniProtKB-UniRule"/>
</dbReference>
<dbReference type="CDD" id="cd00776">
    <property type="entry name" value="AsxRS_core"/>
    <property type="match status" value="1"/>
</dbReference>
<dbReference type="CDD" id="cd04318">
    <property type="entry name" value="EcAsnRS_like_N"/>
    <property type="match status" value="1"/>
</dbReference>
<dbReference type="FunFam" id="3.30.930.10:FF:000016">
    <property type="entry name" value="Asparagine--tRNA ligase"/>
    <property type="match status" value="1"/>
</dbReference>
<dbReference type="Gene3D" id="3.30.930.10">
    <property type="entry name" value="Bira Bifunctional Protein, Domain 2"/>
    <property type="match status" value="1"/>
</dbReference>
<dbReference type="Gene3D" id="2.40.50.140">
    <property type="entry name" value="Nucleic acid-binding proteins"/>
    <property type="match status" value="1"/>
</dbReference>
<dbReference type="HAMAP" id="MF_00534">
    <property type="entry name" value="Asn_tRNA_synth"/>
    <property type="match status" value="1"/>
</dbReference>
<dbReference type="InterPro" id="IPR004364">
    <property type="entry name" value="Aa-tRNA-synt_II"/>
</dbReference>
<dbReference type="InterPro" id="IPR006195">
    <property type="entry name" value="aa-tRNA-synth_II"/>
</dbReference>
<dbReference type="InterPro" id="IPR045864">
    <property type="entry name" value="aa-tRNA-synth_II/BPL/LPL"/>
</dbReference>
<dbReference type="InterPro" id="IPR004522">
    <property type="entry name" value="Asn-tRNA-ligase"/>
</dbReference>
<dbReference type="InterPro" id="IPR002312">
    <property type="entry name" value="Asp/Asn-tRNA-synth_IIb"/>
</dbReference>
<dbReference type="InterPro" id="IPR012340">
    <property type="entry name" value="NA-bd_OB-fold"/>
</dbReference>
<dbReference type="InterPro" id="IPR004365">
    <property type="entry name" value="NA-bd_OB_tRNA"/>
</dbReference>
<dbReference type="NCBIfam" id="TIGR00457">
    <property type="entry name" value="asnS"/>
    <property type="match status" value="1"/>
</dbReference>
<dbReference type="NCBIfam" id="NF003037">
    <property type="entry name" value="PRK03932.1"/>
    <property type="match status" value="1"/>
</dbReference>
<dbReference type="PANTHER" id="PTHR22594:SF34">
    <property type="entry name" value="ASPARAGINE--TRNA LIGASE, MITOCHONDRIAL-RELATED"/>
    <property type="match status" value="1"/>
</dbReference>
<dbReference type="PANTHER" id="PTHR22594">
    <property type="entry name" value="ASPARTYL/LYSYL-TRNA SYNTHETASE"/>
    <property type="match status" value="1"/>
</dbReference>
<dbReference type="Pfam" id="PF00152">
    <property type="entry name" value="tRNA-synt_2"/>
    <property type="match status" value="1"/>
</dbReference>
<dbReference type="Pfam" id="PF01336">
    <property type="entry name" value="tRNA_anti-codon"/>
    <property type="match status" value="1"/>
</dbReference>
<dbReference type="PRINTS" id="PR01042">
    <property type="entry name" value="TRNASYNTHASP"/>
</dbReference>
<dbReference type="SUPFAM" id="SSF55681">
    <property type="entry name" value="Class II aaRS and biotin synthetases"/>
    <property type="match status" value="1"/>
</dbReference>
<dbReference type="SUPFAM" id="SSF50249">
    <property type="entry name" value="Nucleic acid-binding proteins"/>
    <property type="match status" value="1"/>
</dbReference>
<dbReference type="PROSITE" id="PS50862">
    <property type="entry name" value="AA_TRNA_LIGASE_II"/>
    <property type="match status" value="1"/>
</dbReference>
<keyword id="KW-0030">Aminoacyl-tRNA synthetase</keyword>
<keyword id="KW-0067">ATP-binding</keyword>
<keyword id="KW-0963">Cytoplasm</keyword>
<keyword id="KW-0436">Ligase</keyword>
<keyword id="KW-0547">Nucleotide-binding</keyword>
<keyword id="KW-0648">Protein biosynthesis</keyword>
<protein>
    <recommendedName>
        <fullName evidence="1">Asparagine--tRNA ligase</fullName>
        <ecNumber evidence="1">6.1.1.22</ecNumber>
    </recommendedName>
    <alternativeName>
        <fullName evidence="1">Asparaginyl-tRNA synthetase</fullName>
        <shortName evidence="1">AsnRS</shortName>
    </alternativeName>
</protein>
<evidence type="ECO:0000255" key="1">
    <source>
        <dbReference type="HAMAP-Rule" id="MF_00534"/>
    </source>
</evidence>
<gene>
    <name evidence="1" type="primary">asnS</name>
    <name type="ordered locus">MS1042</name>
</gene>
<feature type="chain" id="PRO_0000176425" description="Asparagine--tRNA ligase">
    <location>
        <begin position="1"/>
        <end position="467"/>
    </location>
</feature>
<sequence length="467" mass="52709">MTKIVSVAEVLQGRTAIGEKVTVRGWVRTRRDSKAGLSFLAVYDGSCFDPIQAIINNDIVNYESEVLRLTTGCSVIVTGTVSKSPAEGQAVELQAETVEVVGWVEDPDTYPMAAKRHSIEYLREVAHLRPRTNIIGAVARVRHCLAQAIHRFFNEQGFYWVATPLITASDTEGAGEMFRVSTLDLENLPRDDKGAVDFSQDFFGKESFLTVSGQLNGETYACALSKVYTFGPTFRAENSNTTRHLAEFWMVEPEVAFATLADNAKLAEDMLKYVFNAVLKERMDDLKFFEKHIDKDVINRLERFVASDFAQIDYTDAIDVLLKSGKKFEFPVSWGIDLSSEHERYLAEEHFKSPVVVKNYPKDIKAFYMRLNEDGKTVAAMDVLAPGIGEIIGGSQREERLDVLDARMAEMGLNPEDYWWYRDLRKYGTVPHSGFGLGFERLIVYVTGLQNIREVIPFPRTPRNANF</sequence>
<organism>
    <name type="scientific">Mannheimia succiniciproducens (strain KCTC 0769BP / MBEL55E)</name>
    <dbReference type="NCBI Taxonomy" id="221988"/>
    <lineage>
        <taxon>Bacteria</taxon>
        <taxon>Pseudomonadati</taxon>
        <taxon>Pseudomonadota</taxon>
        <taxon>Gammaproteobacteria</taxon>
        <taxon>Pasteurellales</taxon>
        <taxon>Pasteurellaceae</taxon>
        <taxon>Basfia</taxon>
    </lineage>
</organism>
<accession>Q65TR1</accession>